<feature type="chain" id="PRO_1000142166" description="Large ribosomal subunit protein uL4">
    <location>
        <begin position="1"/>
        <end position="206"/>
    </location>
</feature>
<feature type="region of interest" description="Disordered" evidence="2">
    <location>
        <begin position="43"/>
        <end position="78"/>
    </location>
</feature>
<feature type="compositionally biased region" description="Basic residues" evidence="2">
    <location>
        <begin position="58"/>
        <end position="70"/>
    </location>
</feature>
<proteinExistence type="inferred from homology"/>
<comment type="function">
    <text evidence="1">One of the primary rRNA binding proteins, this protein initially binds near the 5'-end of the 23S rRNA. It is important during the early stages of 50S assembly. It makes multiple contacts with different domains of the 23S rRNA in the assembled 50S subunit and ribosome.</text>
</comment>
<comment type="function">
    <text evidence="1">Forms part of the polypeptide exit tunnel.</text>
</comment>
<comment type="subunit">
    <text evidence="1">Part of the 50S ribosomal subunit.</text>
</comment>
<comment type="similarity">
    <text evidence="1">Belongs to the universal ribosomal protein uL4 family.</text>
</comment>
<dbReference type="EMBL" id="CP001010">
    <property type="protein sequence ID" value="ACB43379.1"/>
    <property type="molecule type" value="Genomic_DNA"/>
</dbReference>
<dbReference type="SMR" id="B1XSQ2"/>
<dbReference type="STRING" id="452638.Pnec_0051"/>
<dbReference type="KEGG" id="pne:Pnec_0051"/>
<dbReference type="eggNOG" id="COG0088">
    <property type="taxonomic scope" value="Bacteria"/>
</dbReference>
<dbReference type="HOGENOM" id="CLU_041575_5_2_4"/>
<dbReference type="OrthoDB" id="9803201at2"/>
<dbReference type="GO" id="GO:1990904">
    <property type="term" value="C:ribonucleoprotein complex"/>
    <property type="evidence" value="ECO:0007669"/>
    <property type="project" value="UniProtKB-KW"/>
</dbReference>
<dbReference type="GO" id="GO:0005840">
    <property type="term" value="C:ribosome"/>
    <property type="evidence" value="ECO:0007669"/>
    <property type="project" value="UniProtKB-KW"/>
</dbReference>
<dbReference type="GO" id="GO:0019843">
    <property type="term" value="F:rRNA binding"/>
    <property type="evidence" value="ECO:0007669"/>
    <property type="project" value="UniProtKB-UniRule"/>
</dbReference>
<dbReference type="GO" id="GO:0003735">
    <property type="term" value="F:structural constituent of ribosome"/>
    <property type="evidence" value="ECO:0007669"/>
    <property type="project" value="InterPro"/>
</dbReference>
<dbReference type="GO" id="GO:0006412">
    <property type="term" value="P:translation"/>
    <property type="evidence" value="ECO:0007669"/>
    <property type="project" value="UniProtKB-UniRule"/>
</dbReference>
<dbReference type="Gene3D" id="3.40.1370.10">
    <property type="match status" value="1"/>
</dbReference>
<dbReference type="HAMAP" id="MF_01328_B">
    <property type="entry name" value="Ribosomal_uL4_B"/>
    <property type="match status" value="1"/>
</dbReference>
<dbReference type="InterPro" id="IPR002136">
    <property type="entry name" value="Ribosomal_uL4"/>
</dbReference>
<dbReference type="InterPro" id="IPR013005">
    <property type="entry name" value="Ribosomal_uL4-like"/>
</dbReference>
<dbReference type="InterPro" id="IPR023574">
    <property type="entry name" value="Ribosomal_uL4_dom_sf"/>
</dbReference>
<dbReference type="NCBIfam" id="TIGR03953">
    <property type="entry name" value="rplD_bact"/>
    <property type="match status" value="1"/>
</dbReference>
<dbReference type="PANTHER" id="PTHR10746">
    <property type="entry name" value="50S RIBOSOMAL PROTEIN L4"/>
    <property type="match status" value="1"/>
</dbReference>
<dbReference type="PANTHER" id="PTHR10746:SF6">
    <property type="entry name" value="LARGE RIBOSOMAL SUBUNIT PROTEIN UL4M"/>
    <property type="match status" value="1"/>
</dbReference>
<dbReference type="Pfam" id="PF00573">
    <property type="entry name" value="Ribosomal_L4"/>
    <property type="match status" value="1"/>
</dbReference>
<dbReference type="SUPFAM" id="SSF52166">
    <property type="entry name" value="Ribosomal protein L4"/>
    <property type="match status" value="1"/>
</dbReference>
<name>RL4_POLNS</name>
<reference key="1">
    <citation type="journal article" date="2013" name="Proc. Natl. Acad. Sci. U.S.A.">
        <title>Polynucleobacter necessarius, a model for genome reduction in both free-living and symbiotic bacteria.</title>
        <authorList>
            <person name="Boscaro V."/>
            <person name="Felletti M."/>
            <person name="Vannini C."/>
            <person name="Ackerman M.S."/>
            <person name="Chain P.S."/>
            <person name="Malfatti S."/>
            <person name="Vergez L.M."/>
            <person name="Shin M."/>
            <person name="Doak T.G."/>
            <person name="Lynch M."/>
            <person name="Petroni G."/>
        </authorList>
    </citation>
    <scope>NUCLEOTIDE SEQUENCE [LARGE SCALE GENOMIC DNA]</scope>
    <source>
        <strain>STIR1</strain>
    </source>
</reference>
<keyword id="KW-0687">Ribonucleoprotein</keyword>
<keyword id="KW-0689">Ribosomal protein</keyword>
<keyword id="KW-0694">RNA-binding</keyword>
<keyword id="KW-0699">rRNA-binding</keyword>
<protein>
    <recommendedName>
        <fullName evidence="1">Large ribosomal subunit protein uL4</fullName>
    </recommendedName>
    <alternativeName>
        <fullName evidence="3">50S ribosomal protein L4</fullName>
    </alternativeName>
</protein>
<accession>B1XSQ2</accession>
<sequence length="206" mass="23030">MELKLLQDNGILGAGVQASPEVFEREYNEALVHQVVVAYQANARSGNRAQKDREQVKHTTKKPWRQKGTGRARAGMSSSPLWRGGGRIFPNSPEENFSQKVNKKMYRAGMRSILSQLAREGRLNVIDQFNLDAPKTKVLAEKMKAMGLDSVLIIVDQVSENLYLASRNLHKVAVVEPQHADPLALVQYKKVLVSKAAITKIEELLK</sequence>
<evidence type="ECO:0000255" key="1">
    <source>
        <dbReference type="HAMAP-Rule" id="MF_01328"/>
    </source>
</evidence>
<evidence type="ECO:0000256" key="2">
    <source>
        <dbReference type="SAM" id="MobiDB-lite"/>
    </source>
</evidence>
<evidence type="ECO:0000305" key="3"/>
<organism>
    <name type="scientific">Polynucleobacter necessarius subsp. necessarius (strain STIR1)</name>
    <dbReference type="NCBI Taxonomy" id="452638"/>
    <lineage>
        <taxon>Bacteria</taxon>
        <taxon>Pseudomonadati</taxon>
        <taxon>Pseudomonadota</taxon>
        <taxon>Betaproteobacteria</taxon>
        <taxon>Burkholderiales</taxon>
        <taxon>Burkholderiaceae</taxon>
        <taxon>Polynucleobacter</taxon>
    </lineage>
</organism>
<gene>
    <name evidence="1" type="primary">rplD</name>
    <name type="ordered locus">Pnec_0051</name>
</gene>